<reference key="1">
    <citation type="submission" date="2005-09" db="EMBL/GenBank/DDBJ databases">
        <title>The chloroplast genome of mulberry: structural features and comparative analysis.</title>
        <authorList>
            <person name="Ravi V."/>
            <person name="Khurana J.P."/>
            <person name="Tyagi A.K."/>
            <person name="Khurana P."/>
        </authorList>
    </citation>
    <scope>NUCLEOTIDE SEQUENCE [LARGE SCALE GENOMIC DNA]</scope>
    <source>
        <strain>cv. K2</strain>
    </source>
</reference>
<sequence length="510" mass="56530">MIWHVQNENFILDSTRIFMKAFHLLLFDGSFIFPECILIFGLILLLMIDSTSDQKDIPWLYFISSTSLVMSITALLFRWREEPMISFSGNFQTNNFNEIFQFLILLCSTLCIPLSVEYIECTEMAITEFLLFVLTATLGGMFLCGANDLITIFVAPECFSLCSYLLSGYTKKDVRSNEATTKYLLMGGASSSILVHGFSWLYGSSGGEIELQEIVNGLINTQMYNSPGISIALIFITVGIGFKLSPAPSHQWTPDVYEGSPTPVVAFLSVTSKVAASASATRIFDIPFYFSSNEWHLLLEILAILSMILGNLIAITQTSMKRMLAYSSIGQIGYVIIGIIVGDSNGGYASMITYMLFYISMNLGTFACIVSFGLRTGTDNIRDYAGLYTKDAFLALSLALCLLSLGGLPPLAGFFGKLHLFWCGWQAGLYFLVSIGLLTSVVSIYYYLKIIKLLMTGRNQEITPHVQNYRRSPLRSNNSIELSMIVCVIASTIPGISMNPIIEIAQDTLF</sequence>
<organism>
    <name type="scientific">Morus indica</name>
    <name type="common">Mulberry</name>
    <dbReference type="NCBI Taxonomy" id="248361"/>
    <lineage>
        <taxon>Eukaryota</taxon>
        <taxon>Viridiplantae</taxon>
        <taxon>Streptophyta</taxon>
        <taxon>Embryophyta</taxon>
        <taxon>Tracheophyta</taxon>
        <taxon>Spermatophyta</taxon>
        <taxon>Magnoliopsida</taxon>
        <taxon>eudicotyledons</taxon>
        <taxon>Gunneridae</taxon>
        <taxon>Pentapetalae</taxon>
        <taxon>rosids</taxon>
        <taxon>fabids</taxon>
        <taxon>Rosales</taxon>
        <taxon>Moraceae</taxon>
        <taxon>Moreae</taxon>
        <taxon>Morus</taxon>
    </lineage>
</organism>
<proteinExistence type="inferred from homology"/>
<comment type="function">
    <text evidence="1">NDH shuttles electrons from NAD(P)H:plastoquinone, via FMN and iron-sulfur (Fe-S) centers, to quinones in the photosynthetic chain and possibly in a chloroplast respiratory chain. The immediate electron acceptor for the enzyme in this species is believed to be plastoquinone. Couples the redox reaction to proton translocation, and thus conserves the redox energy in a proton gradient.</text>
</comment>
<comment type="catalytic activity">
    <reaction evidence="1">
        <text>a plastoquinone + NADH + (n+1) H(+)(in) = a plastoquinol + NAD(+) + n H(+)(out)</text>
        <dbReference type="Rhea" id="RHEA:42608"/>
        <dbReference type="Rhea" id="RHEA-COMP:9561"/>
        <dbReference type="Rhea" id="RHEA-COMP:9562"/>
        <dbReference type="ChEBI" id="CHEBI:15378"/>
        <dbReference type="ChEBI" id="CHEBI:17757"/>
        <dbReference type="ChEBI" id="CHEBI:57540"/>
        <dbReference type="ChEBI" id="CHEBI:57945"/>
        <dbReference type="ChEBI" id="CHEBI:62192"/>
    </reaction>
</comment>
<comment type="catalytic activity">
    <reaction evidence="1">
        <text>a plastoquinone + NADPH + (n+1) H(+)(in) = a plastoquinol + NADP(+) + n H(+)(out)</text>
        <dbReference type="Rhea" id="RHEA:42612"/>
        <dbReference type="Rhea" id="RHEA-COMP:9561"/>
        <dbReference type="Rhea" id="RHEA-COMP:9562"/>
        <dbReference type="ChEBI" id="CHEBI:15378"/>
        <dbReference type="ChEBI" id="CHEBI:17757"/>
        <dbReference type="ChEBI" id="CHEBI:57783"/>
        <dbReference type="ChEBI" id="CHEBI:58349"/>
        <dbReference type="ChEBI" id="CHEBI:62192"/>
    </reaction>
</comment>
<comment type="subunit">
    <text evidence="1">NDH is composed of at least 16 different subunits, 5 of which are encoded in the nucleus.</text>
</comment>
<comment type="subcellular location">
    <subcellularLocation>
        <location evidence="1">Plastid</location>
        <location evidence="1">Chloroplast thylakoid membrane</location>
        <topology evidence="1">Multi-pass membrane protein</topology>
    </subcellularLocation>
</comment>
<comment type="similarity">
    <text evidence="1">Belongs to the complex I subunit 2 family.</text>
</comment>
<dbReference type="EC" id="7.1.1.-" evidence="1"/>
<dbReference type="EMBL" id="DQ226511">
    <property type="protein sequence ID" value="ABB21001.1"/>
    <property type="molecule type" value="Genomic_DNA"/>
</dbReference>
<dbReference type="SMR" id="P0CC92"/>
<dbReference type="GO" id="GO:0009535">
    <property type="term" value="C:chloroplast thylakoid membrane"/>
    <property type="evidence" value="ECO:0007669"/>
    <property type="project" value="UniProtKB-SubCell"/>
</dbReference>
<dbReference type="GO" id="GO:0008137">
    <property type="term" value="F:NADH dehydrogenase (ubiquinone) activity"/>
    <property type="evidence" value="ECO:0007669"/>
    <property type="project" value="InterPro"/>
</dbReference>
<dbReference type="GO" id="GO:0048038">
    <property type="term" value="F:quinone binding"/>
    <property type="evidence" value="ECO:0007669"/>
    <property type="project" value="UniProtKB-KW"/>
</dbReference>
<dbReference type="GO" id="GO:0042773">
    <property type="term" value="P:ATP synthesis coupled electron transport"/>
    <property type="evidence" value="ECO:0007669"/>
    <property type="project" value="InterPro"/>
</dbReference>
<dbReference type="GO" id="GO:0019684">
    <property type="term" value="P:photosynthesis, light reaction"/>
    <property type="evidence" value="ECO:0007669"/>
    <property type="project" value="UniProtKB-UniRule"/>
</dbReference>
<dbReference type="HAMAP" id="MF_00445">
    <property type="entry name" value="NDH1_NuoN_1"/>
    <property type="match status" value="1"/>
</dbReference>
<dbReference type="InterPro" id="IPR010096">
    <property type="entry name" value="NADH-Q_OxRdtase_suN/2"/>
</dbReference>
<dbReference type="InterPro" id="IPR001750">
    <property type="entry name" value="ND/Mrp_TM"/>
</dbReference>
<dbReference type="InterPro" id="IPR045693">
    <property type="entry name" value="Ndh2_N"/>
</dbReference>
<dbReference type="NCBIfam" id="TIGR01770">
    <property type="entry name" value="NDH_I_N"/>
    <property type="match status" value="1"/>
</dbReference>
<dbReference type="NCBIfam" id="NF002701">
    <property type="entry name" value="PRK02504.1"/>
    <property type="match status" value="1"/>
</dbReference>
<dbReference type="PANTHER" id="PTHR22773">
    <property type="entry name" value="NADH DEHYDROGENASE"/>
    <property type="match status" value="1"/>
</dbReference>
<dbReference type="Pfam" id="PF19530">
    <property type="entry name" value="Ndh2_N"/>
    <property type="match status" value="1"/>
</dbReference>
<dbReference type="Pfam" id="PF00361">
    <property type="entry name" value="Proton_antipo_M"/>
    <property type="match status" value="1"/>
</dbReference>
<dbReference type="PRINTS" id="PR01434">
    <property type="entry name" value="NADHDHGNASE5"/>
</dbReference>
<geneLocation type="chloroplast"/>
<keyword id="KW-0150">Chloroplast</keyword>
<keyword id="KW-0472">Membrane</keyword>
<keyword id="KW-0520">NAD</keyword>
<keyword id="KW-0521">NADP</keyword>
<keyword id="KW-0934">Plastid</keyword>
<keyword id="KW-0618">Plastoquinone</keyword>
<keyword id="KW-0874">Quinone</keyword>
<keyword id="KW-0793">Thylakoid</keyword>
<keyword id="KW-1278">Translocase</keyword>
<keyword id="KW-0812">Transmembrane</keyword>
<keyword id="KW-1133">Transmembrane helix</keyword>
<keyword id="KW-0813">Transport</keyword>
<protein>
    <recommendedName>
        <fullName evidence="1">NAD(P)H-quinone oxidoreductase subunit 2 A, chloroplastic</fullName>
        <ecNumber evidence="1">7.1.1.-</ecNumber>
    </recommendedName>
    <alternativeName>
        <fullName evidence="1">NAD(P)H dehydrogenase, subunit 2 A</fullName>
    </alternativeName>
    <alternativeName>
        <fullName evidence="1">NADH-plastoquinone oxidoreductase subunit 2 A</fullName>
    </alternativeName>
</protein>
<name>NU2C1_MORIN</name>
<evidence type="ECO:0000255" key="1">
    <source>
        <dbReference type="HAMAP-Rule" id="MF_00445"/>
    </source>
</evidence>
<accession>P0CC92</accession>
<accession>Q09WV8</accession>
<feature type="chain" id="PRO_0000275601" description="NAD(P)H-quinone oxidoreductase subunit 2 A, chloroplastic">
    <location>
        <begin position="1"/>
        <end position="510"/>
    </location>
</feature>
<feature type="transmembrane region" description="Helical" evidence="1">
    <location>
        <begin position="24"/>
        <end position="44"/>
    </location>
</feature>
<feature type="transmembrane region" description="Helical" evidence="1">
    <location>
        <begin position="57"/>
        <end position="77"/>
    </location>
</feature>
<feature type="transmembrane region" description="Helical" evidence="1">
    <location>
        <begin position="99"/>
        <end position="119"/>
    </location>
</feature>
<feature type="transmembrane region" description="Helical" evidence="1">
    <location>
        <begin position="124"/>
        <end position="144"/>
    </location>
</feature>
<feature type="transmembrane region" description="Helical" evidence="1">
    <location>
        <begin position="149"/>
        <end position="169"/>
    </location>
</feature>
<feature type="transmembrane region" description="Helical" evidence="1">
    <location>
        <begin position="183"/>
        <end position="203"/>
    </location>
</feature>
<feature type="transmembrane region" description="Helical" evidence="1">
    <location>
        <begin position="227"/>
        <end position="247"/>
    </location>
</feature>
<feature type="transmembrane region" description="Helical" evidence="1">
    <location>
        <begin position="295"/>
        <end position="315"/>
    </location>
</feature>
<feature type="transmembrane region" description="Helical" evidence="1">
    <location>
        <begin position="323"/>
        <end position="343"/>
    </location>
</feature>
<feature type="transmembrane region" description="Helical" evidence="1">
    <location>
        <begin position="354"/>
        <end position="374"/>
    </location>
</feature>
<feature type="transmembrane region" description="Helical" evidence="1">
    <location>
        <begin position="392"/>
        <end position="412"/>
    </location>
</feature>
<feature type="transmembrane region" description="Helical" evidence="1">
    <location>
        <begin position="418"/>
        <end position="438"/>
    </location>
</feature>
<feature type="transmembrane region" description="Helical" evidence="1">
    <location>
        <begin position="482"/>
        <end position="502"/>
    </location>
</feature>
<gene>
    <name evidence="1" type="primary">ndhB1</name>
    <name type="synonym">ndhB-A</name>
    <name type="ordered locus">MoinCp065</name>
</gene>